<sequence length="180" mass="20247">MGGVLSYFRGLLGSREMRILILGLDGAGKTTILYRLQVGEVVTTIPTIGFNVEQVTYKNLKFQVWDLGGQTSIRPYWRCYYSNTDAIIYVVDSADRDRIGISKDELLYMLREEELAGAILVVLANKQDMDGCMTVAEVHHALGLENLKNRTFQIFKTSATKGEGLDQAMDWLSNTLQSRK</sequence>
<reference key="1">
    <citation type="journal article" date="1991" name="Proc. Natl. Acad. Sci. U.S.A.">
        <title>The arflike gene encodes an essential GTP-binding protein in Drosophila.</title>
        <authorList>
            <person name="Tamkun J.W."/>
            <person name="Kahn R.A."/>
            <person name="Kissinger M."/>
            <person name="Brizuela B.J."/>
            <person name="Rulka C."/>
            <person name="Scott M.P."/>
            <person name="Kennison J.A."/>
        </authorList>
    </citation>
    <scope>NUCLEOTIDE SEQUENCE [GENOMIC DNA]</scope>
</reference>
<reference key="2">
    <citation type="journal article" date="2000" name="Science">
        <title>The genome sequence of Drosophila melanogaster.</title>
        <authorList>
            <person name="Adams M.D."/>
            <person name="Celniker S.E."/>
            <person name="Holt R.A."/>
            <person name="Evans C.A."/>
            <person name="Gocayne J.D."/>
            <person name="Amanatides P.G."/>
            <person name="Scherer S.E."/>
            <person name="Li P.W."/>
            <person name="Hoskins R.A."/>
            <person name="Galle R.F."/>
            <person name="George R.A."/>
            <person name="Lewis S.E."/>
            <person name="Richards S."/>
            <person name="Ashburner M."/>
            <person name="Henderson S.N."/>
            <person name="Sutton G.G."/>
            <person name="Wortman J.R."/>
            <person name="Yandell M.D."/>
            <person name="Zhang Q."/>
            <person name="Chen L.X."/>
            <person name="Brandon R.C."/>
            <person name="Rogers Y.-H.C."/>
            <person name="Blazej R.G."/>
            <person name="Champe M."/>
            <person name="Pfeiffer B.D."/>
            <person name="Wan K.H."/>
            <person name="Doyle C."/>
            <person name="Baxter E.G."/>
            <person name="Helt G."/>
            <person name="Nelson C.R."/>
            <person name="Miklos G.L.G."/>
            <person name="Abril J.F."/>
            <person name="Agbayani A."/>
            <person name="An H.-J."/>
            <person name="Andrews-Pfannkoch C."/>
            <person name="Baldwin D."/>
            <person name="Ballew R.M."/>
            <person name="Basu A."/>
            <person name="Baxendale J."/>
            <person name="Bayraktaroglu L."/>
            <person name="Beasley E.M."/>
            <person name="Beeson K.Y."/>
            <person name="Benos P.V."/>
            <person name="Berman B.P."/>
            <person name="Bhandari D."/>
            <person name="Bolshakov S."/>
            <person name="Borkova D."/>
            <person name="Botchan M.R."/>
            <person name="Bouck J."/>
            <person name="Brokstein P."/>
            <person name="Brottier P."/>
            <person name="Burtis K.C."/>
            <person name="Busam D.A."/>
            <person name="Butler H."/>
            <person name="Cadieu E."/>
            <person name="Center A."/>
            <person name="Chandra I."/>
            <person name="Cherry J.M."/>
            <person name="Cawley S."/>
            <person name="Dahlke C."/>
            <person name="Davenport L.B."/>
            <person name="Davies P."/>
            <person name="de Pablos B."/>
            <person name="Delcher A."/>
            <person name="Deng Z."/>
            <person name="Mays A.D."/>
            <person name="Dew I."/>
            <person name="Dietz S.M."/>
            <person name="Dodson K."/>
            <person name="Doup L.E."/>
            <person name="Downes M."/>
            <person name="Dugan-Rocha S."/>
            <person name="Dunkov B.C."/>
            <person name="Dunn P."/>
            <person name="Durbin K.J."/>
            <person name="Evangelista C.C."/>
            <person name="Ferraz C."/>
            <person name="Ferriera S."/>
            <person name="Fleischmann W."/>
            <person name="Fosler C."/>
            <person name="Gabrielian A.E."/>
            <person name="Garg N.S."/>
            <person name="Gelbart W.M."/>
            <person name="Glasser K."/>
            <person name="Glodek A."/>
            <person name="Gong F."/>
            <person name="Gorrell J.H."/>
            <person name="Gu Z."/>
            <person name="Guan P."/>
            <person name="Harris M."/>
            <person name="Harris N.L."/>
            <person name="Harvey D.A."/>
            <person name="Heiman T.J."/>
            <person name="Hernandez J.R."/>
            <person name="Houck J."/>
            <person name="Hostin D."/>
            <person name="Houston K.A."/>
            <person name="Howland T.J."/>
            <person name="Wei M.-H."/>
            <person name="Ibegwam C."/>
            <person name="Jalali M."/>
            <person name="Kalush F."/>
            <person name="Karpen G.H."/>
            <person name="Ke Z."/>
            <person name="Kennison J.A."/>
            <person name="Ketchum K.A."/>
            <person name="Kimmel B.E."/>
            <person name="Kodira C.D."/>
            <person name="Kraft C.L."/>
            <person name="Kravitz S."/>
            <person name="Kulp D."/>
            <person name="Lai Z."/>
            <person name="Lasko P."/>
            <person name="Lei Y."/>
            <person name="Levitsky A.A."/>
            <person name="Li J.H."/>
            <person name="Li Z."/>
            <person name="Liang Y."/>
            <person name="Lin X."/>
            <person name="Liu X."/>
            <person name="Mattei B."/>
            <person name="McIntosh T.C."/>
            <person name="McLeod M.P."/>
            <person name="McPherson D."/>
            <person name="Merkulov G."/>
            <person name="Milshina N.V."/>
            <person name="Mobarry C."/>
            <person name="Morris J."/>
            <person name="Moshrefi A."/>
            <person name="Mount S.M."/>
            <person name="Moy M."/>
            <person name="Murphy B."/>
            <person name="Murphy L."/>
            <person name="Muzny D.M."/>
            <person name="Nelson D.L."/>
            <person name="Nelson D.R."/>
            <person name="Nelson K.A."/>
            <person name="Nixon K."/>
            <person name="Nusskern D.R."/>
            <person name="Pacleb J.M."/>
            <person name="Palazzolo M."/>
            <person name="Pittman G.S."/>
            <person name="Pan S."/>
            <person name="Pollard J."/>
            <person name="Puri V."/>
            <person name="Reese M.G."/>
            <person name="Reinert K."/>
            <person name="Remington K."/>
            <person name="Saunders R.D.C."/>
            <person name="Scheeler F."/>
            <person name="Shen H."/>
            <person name="Shue B.C."/>
            <person name="Siden-Kiamos I."/>
            <person name="Simpson M."/>
            <person name="Skupski M.P."/>
            <person name="Smith T.J."/>
            <person name="Spier E."/>
            <person name="Spradling A.C."/>
            <person name="Stapleton M."/>
            <person name="Strong R."/>
            <person name="Sun E."/>
            <person name="Svirskas R."/>
            <person name="Tector C."/>
            <person name="Turner R."/>
            <person name="Venter E."/>
            <person name="Wang A.H."/>
            <person name="Wang X."/>
            <person name="Wang Z.-Y."/>
            <person name="Wassarman D.A."/>
            <person name="Weinstock G.M."/>
            <person name="Weissenbach J."/>
            <person name="Williams S.M."/>
            <person name="Woodage T."/>
            <person name="Worley K.C."/>
            <person name="Wu D."/>
            <person name="Yang S."/>
            <person name="Yao Q.A."/>
            <person name="Ye J."/>
            <person name="Yeh R.-F."/>
            <person name="Zaveri J.S."/>
            <person name="Zhan M."/>
            <person name="Zhang G."/>
            <person name="Zhao Q."/>
            <person name="Zheng L."/>
            <person name="Zheng X.H."/>
            <person name="Zhong F.N."/>
            <person name="Zhong W."/>
            <person name="Zhou X."/>
            <person name="Zhu S.C."/>
            <person name="Zhu X."/>
            <person name="Smith H.O."/>
            <person name="Gibbs R.A."/>
            <person name="Myers E.W."/>
            <person name="Rubin G.M."/>
            <person name="Venter J.C."/>
        </authorList>
    </citation>
    <scope>NUCLEOTIDE SEQUENCE [LARGE SCALE GENOMIC DNA]</scope>
    <source>
        <strain>Berkeley</strain>
    </source>
</reference>
<reference key="3">
    <citation type="journal article" date="2002" name="Genome Biol.">
        <title>Annotation of the Drosophila melanogaster euchromatic genome: a systematic review.</title>
        <authorList>
            <person name="Misra S."/>
            <person name="Crosby M.A."/>
            <person name="Mungall C.J."/>
            <person name="Matthews B.B."/>
            <person name="Campbell K.S."/>
            <person name="Hradecky P."/>
            <person name="Huang Y."/>
            <person name="Kaminker J.S."/>
            <person name="Millburn G.H."/>
            <person name="Prochnik S.E."/>
            <person name="Smith C.D."/>
            <person name="Tupy J.L."/>
            <person name="Whitfield E.J."/>
            <person name="Bayraktaroglu L."/>
            <person name="Berman B.P."/>
            <person name="Bettencourt B.R."/>
            <person name="Celniker S.E."/>
            <person name="de Grey A.D.N.J."/>
            <person name="Drysdale R.A."/>
            <person name="Harris N.L."/>
            <person name="Richter J."/>
            <person name="Russo S."/>
            <person name="Schroeder A.J."/>
            <person name="Shu S.Q."/>
            <person name="Stapleton M."/>
            <person name="Yamada C."/>
            <person name="Ashburner M."/>
            <person name="Gelbart W.M."/>
            <person name="Rubin G.M."/>
            <person name="Lewis S.E."/>
        </authorList>
    </citation>
    <scope>GENOME REANNOTATION</scope>
    <source>
        <strain>Berkeley</strain>
    </source>
</reference>
<reference key="4">
    <citation type="journal article" date="2002" name="Genome Biol.">
        <title>A Drosophila full-length cDNA resource.</title>
        <authorList>
            <person name="Stapleton M."/>
            <person name="Carlson J.W."/>
            <person name="Brokstein P."/>
            <person name="Yu C."/>
            <person name="Champe M."/>
            <person name="George R.A."/>
            <person name="Guarin H."/>
            <person name="Kronmiller B."/>
            <person name="Pacleb J.M."/>
            <person name="Park S."/>
            <person name="Wan K.H."/>
            <person name="Rubin G.M."/>
            <person name="Celniker S.E."/>
        </authorList>
    </citation>
    <scope>NUCLEOTIDE SEQUENCE [LARGE SCALE MRNA]</scope>
    <source>
        <strain>Berkeley</strain>
        <tissue>Ovary</tissue>
    </source>
</reference>
<proteinExistence type="evidence at transcript level"/>
<protein>
    <recommendedName>
        <fullName>ADP-ribosylation factor-like protein 1</fullName>
    </recommendedName>
</protein>
<feature type="initiator methionine" description="Removed" evidence="2">
    <location>
        <position position="1"/>
    </location>
</feature>
<feature type="chain" id="PRO_0000207448" description="ADP-ribosylation factor-like protein 1">
    <location>
        <begin position="2"/>
        <end position="180"/>
    </location>
</feature>
<feature type="binding site" evidence="1">
    <location>
        <begin position="23"/>
        <end position="30"/>
    </location>
    <ligand>
        <name>GTP</name>
        <dbReference type="ChEBI" id="CHEBI:37565"/>
    </ligand>
</feature>
<feature type="binding site" evidence="1">
    <location>
        <begin position="66"/>
        <end position="70"/>
    </location>
    <ligand>
        <name>GTP</name>
        <dbReference type="ChEBI" id="CHEBI:37565"/>
    </ligand>
</feature>
<feature type="binding site" evidence="1">
    <location>
        <begin position="125"/>
        <end position="128"/>
    </location>
    <ligand>
        <name>GTP</name>
        <dbReference type="ChEBI" id="CHEBI:37565"/>
    </ligand>
</feature>
<feature type="lipid moiety-binding region" description="N-myristoyl glycine" evidence="2">
    <location>
        <position position="2"/>
    </location>
</feature>
<dbReference type="EMBL" id="M61127">
    <property type="protein sequence ID" value="AAA28365.1"/>
    <property type="molecule type" value="Genomic_DNA"/>
</dbReference>
<dbReference type="EMBL" id="AE014296">
    <property type="protein sequence ID" value="AAF49556.2"/>
    <property type="molecule type" value="Genomic_DNA"/>
</dbReference>
<dbReference type="EMBL" id="BT001460">
    <property type="protein sequence ID" value="AAN71215.1"/>
    <property type="molecule type" value="mRNA"/>
</dbReference>
<dbReference type="PIR" id="A40438">
    <property type="entry name" value="A40438"/>
</dbReference>
<dbReference type="RefSeq" id="NP_524098.2">
    <property type="nucleotide sequence ID" value="NM_079374.4"/>
</dbReference>
<dbReference type="SMR" id="P25160"/>
<dbReference type="BioGRID" id="65056">
    <property type="interactions" value="18"/>
</dbReference>
<dbReference type="DIP" id="DIP-21617N"/>
<dbReference type="FunCoup" id="P25160">
    <property type="interactions" value="1164"/>
</dbReference>
<dbReference type="IntAct" id="P25160">
    <property type="interactions" value="5"/>
</dbReference>
<dbReference type="STRING" id="7227.FBpp0075272"/>
<dbReference type="PaxDb" id="7227-FBpp0075272"/>
<dbReference type="DNASU" id="39745"/>
<dbReference type="EnsemblMetazoa" id="FBtr0075517">
    <property type="protein sequence ID" value="FBpp0075272"/>
    <property type="gene ID" value="FBgn0000115"/>
</dbReference>
<dbReference type="GeneID" id="39745"/>
<dbReference type="KEGG" id="dme:Dmel_CG6025"/>
<dbReference type="AGR" id="FB:FBgn0000115"/>
<dbReference type="CTD" id="400"/>
<dbReference type="FlyBase" id="FBgn0000115">
    <property type="gene designation" value="Arl1"/>
</dbReference>
<dbReference type="VEuPathDB" id="VectorBase:FBgn0000115"/>
<dbReference type="eggNOG" id="KOG0072">
    <property type="taxonomic scope" value="Eukaryota"/>
</dbReference>
<dbReference type="GeneTree" id="ENSGT00940000155118"/>
<dbReference type="HOGENOM" id="CLU_040729_9_3_1"/>
<dbReference type="InParanoid" id="P25160"/>
<dbReference type="OMA" id="MGAGMSW"/>
<dbReference type="OrthoDB" id="2011769at2759"/>
<dbReference type="PhylomeDB" id="P25160"/>
<dbReference type="Reactome" id="R-DME-6811440">
    <property type="pathway name" value="Retrograde transport at the Trans-Golgi-Network"/>
</dbReference>
<dbReference type="BioGRID-ORCS" id="39745">
    <property type="hits" value="0 hits in 1 CRISPR screen"/>
</dbReference>
<dbReference type="ChiTaRS" id="Arl1">
    <property type="organism name" value="fly"/>
</dbReference>
<dbReference type="GenomeRNAi" id="39745"/>
<dbReference type="PRO" id="PR:P25160"/>
<dbReference type="Proteomes" id="UP000000803">
    <property type="component" value="Chromosome 3L"/>
</dbReference>
<dbReference type="Bgee" id="FBgn0000115">
    <property type="expression patterns" value="Expressed in embryonic/larval hemocyte (Drosophila) and 142 other cell types or tissues"/>
</dbReference>
<dbReference type="GO" id="GO:0005737">
    <property type="term" value="C:cytoplasm"/>
    <property type="evidence" value="ECO:0000318"/>
    <property type="project" value="GO_Central"/>
</dbReference>
<dbReference type="GO" id="GO:0005794">
    <property type="term" value="C:Golgi apparatus"/>
    <property type="evidence" value="ECO:0000314"/>
    <property type="project" value="FlyBase"/>
</dbReference>
<dbReference type="GO" id="GO:0098793">
    <property type="term" value="C:presynapse"/>
    <property type="evidence" value="ECO:0007669"/>
    <property type="project" value="GOC"/>
</dbReference>
<dbReference type="GO" id="GO:0005802">
    <property type="term" value="C:trans-Golgi network"/>
    <property type="evidence" value="ECO:0000314"/>
    <property type="project" value="FlyBase"/>
</dbReference>
<dbReference type="GO" id="GO:0005525">
    <property type="term" value="F:GTP binding"/>
    <property type="evidence" value="ECO:0000314"/>
    <property type="project" value="FlyBase"/>
</dbReference>
<dbReference type="GO" id="GO:0003924">
    <property type="term" value="F:GTPase activity"/>
    <property type="evidence" value="ECO:0000250"/>
    <property type="project" value="FlyBase"/>
</dbReference>
<dbReference type="GO" id="GO:0019904">
    <property type="term" value="F:protein domain specific binding"/>
    <property type="evidence" value="ECO:0000353"/>
    <property type="project" value="FlyBase"/>
</dbReference>
<dbReference type="GO" id="GO:0090158">
    <property type="term" value="P:endoplasmic reticulum membrane organization"/>
    <property type="evidence" value="ECO:0000315"/>
    <property type="project" value="FlyBase"/>
</dbReference>
<dbReference type="GO" id="GO:0007030">
    <property type="term" value="P:Golgi organization"/>
    <property type="evidence" value="ECO:0000315"/>
    <property type="project" value="FlyBase"/>
</dbReference>
<dbReference type="GO" id="GO:0006886">
    <property type="term" value="P:intracellular protein transport"/>
    <property type="evidence" value="ECO:0000318"/>
    <property type="project" value="GO_Central"/>
</dbReference>
<dbReference type="GO" id="GO:0007269">
    <property type="term" value="P:neurotransmitter secretion"/>
    <property type="evidence" value="ECO:0000304"/>
    <property type="project" value="FlyBase"/>
</dbReference>
<dbReference type="GO" id="GO:0034067">
    <property type="term" value="P:protein localization to Golgi apparatus"/>
    <property type="evidence" value="ECO:0000315"/>
    <property type="project" value="FlyBase"/>
</dbReference>
<dbReference type="GO" id="GO:1903292">
    <property type="term" value="P:protein localization to Golgi membrane"/>
    <property type="evidence" value="ECO:0000314"/>
    <property type="project" value="FlyBase"/>
</dbReference>
<dbReference type="GO" id="GO:0030334">
    <property type="term" value="P:regulation of cell migration"/>
    <property type="evidence" value="ECO:0000315"/>
    <property type="project" value="FlyBase"/>
</dbReference>
<dbReference type="GO" id="GO:0060628">
    <property type="term" value="P:regulation of ER to Golgi vesicle-mediated transport"/>
    <property type="evidence" value="ECO:0000315"/>
    <property type="project" value="FlyBase"/>
</dbReference>
<dbReference type="GO" id="GO:0070861">
    <property type="term" value="P:regulation of protein exit from endoplasmic reticulum"/>
    <property type="evidence" value="ECO:0000315"/>
    <property type="project" value="FlyBase"/>
</dbReference>
<dbReference type="GO" id="GO:0007431">
    <property type="term" value="P:salivary gland development"/>
    <property type="evidence" value="ECO:0000315"/>
    <property type="project" value="FlyBase"/>
</dbReference>
<dbReference type="GO" id="GO:0033363">
    <property type="term" value="P:secretory granule organization"/>
    <property type="evidence" value="ECO:0000315"/>
    <property type="project" value="FlyBase"/>
</dbReference>
<dbReference type="GO" id="GO:0048488">
    <property type="term" value="P:synaptic vesicle endocytosis"/>
    <property type="evidence" value="ECO:0000304"/>
    <property type="project" value="FlyBase"/>
</dbReference>
<dbReference type="GO" id="GO:0016192">
    <property type="term" value="P:vesicle-mediated transport"/>
    <property type="evidence" value="ECO:0000318"/>
    <property type="project" value="GO_Central"/>
</dbReference>
<dbReference type="GO" id="GO:0035220">
    <property type="term" value="P:wing disc development"/>
    <property type="evidence" value="ECO:0000315"/>
    <property type="project" value="FlyBase"/>
</dbReference>
<dbReference type="CDD" id="cd04151">
    <property type="entry name" value="Arl1"/>
    <property type="match status" value="1"/>
</dbReference>
<dbReference type="FunFam" id="3.40.50.300:FF:000306">
    <property type="entry name" value="ADP-ribosylation factor-like protein 1"/>
    <property type="match status" value="1"/>
</dbReference>
<dbReference type="Gene3D" id="3.40.50.300">
    <property type="entry name" value="P-loop containing nucleotide triphosphate hydrolases"/>
    <property type="match status" value="1"/>
</dbReference>
<dbReference type="InterPro" id="IPR027417">
    <property type="entry name" value="P-loop_NTPase"/>
</dbReference>
<dbReference type="InterPro" id="IPR005225">
    <property type="entry name" value="Small_GTP-bd"/>
</dbReference>
<dbReference type="InterPro" id="IPR024156">
    <property type="entry name" value="Small_GTPase_ARF"/>
</dbReference>
<dbReference type="InterPro" id="IPR006689">
    <property type="entry name" value="Small_GTPase_ARF/SAR"/>
</dbReference>
<dbReference type="NCBIfam" id="TIGR00231">
    <property type="entry name" value="small_GTP"/>
    <property type="match status" value="1"/>
</dbReference>
<dbReference type="PANTHER" id="PTHR11711">
    <property type="entry name" value="ADP RIBOSYLATION FACTOR-RELATED"/>
    <property type="match status" value="1"/>
</dbReference>
<dbReference type="Pfam" id="PF00025">
    <property type="entry name" value="Arf"/>
    <property type="match status" value="1"/>
</dbReference>
<dbReference type="PRINTS" id="PR00328">
    <property type="entry name" value="SAR1GTPBP"/>
</dbReference>
<dbReference type="SMART" id="SM00177">
    <property type="entry name" value="ARF"/>
    <property type="match status" value="1"/>
</dbReference>
<dbReference type="SMART" id="SM00175">
    <property type="entry name" value="RAB"/>
    <property type="match status" value="1"/>
</dbReference>
<dbReference type="SMART" id="SM00178">
    <property type="entry name" value="SAR"/>
    <property type="match status" value="1"/>
</dbReference>
<dbReference type="SUPFAM" id="SSF52540">
    <property type="entry name" value="P-loop containing nucleoside triphosphate hydrolases"/>
    <property type="match status" value="1"/>
</dbReference>
<dbReference type="PROSITE" id="PS51417">
    <property type="entry name" value="ARF"/>
    <property type="match status" value="1"/>
</dbReference>
<evidence type="ECO:0000250" key="1"/>
<evidence type="ECO:0000255" key="2"/>
<evidence type="ECO:0000305" key="3"/>
<gene>
    <name type="primary">Arl1</name>
    <name type="synonym">Arf72A</name>
    <name type="synonym">arl</name>
    <name type="ORF">CG6025</name>
</gene>
<organism>
    <name type="scientific">Drosophila melanogaster</name>
    <name type="common">Fruit fly</name>
    <dbReference type="NCBI Taxonomy" id="7227"/>
    <lineage>
        <taxon>Eukaryota</taxon>
        <taxon>Metazoa</taxon>
        <taxon>Ecdysozoa</taxon>
        <taxon>Arthropoda</taxon>
        <taxon>Hexapoda</taxon>
        <taxon>Insecta</taxon>
        <taxon>Pterygota</taxon>
        <taxon>Neoptera</taxon>
        <taxon>Endopterygota</taxon>
        <taxon>Diptera</taxon>
        <taxon>Brachycera</taxon>
        <taxon>Muscomorpha</taxon>
        <taxon>Ephydroidea</taxon>
        <taxon>Drosophilidae</taxon>
        <taxon>Drosophila</taxon>
        <taxon>Sophophora</taxon>
    </lineage>
</organism>
<keyword id="KW-0342">GTP-binding</keyword>
<keyword id="KW-0449">Lipoprotein</keyword>
<keyword id="KW-0519">Myristate</keyword>
<keyword id="KW-0547">Nucleotide-binding</keyword>
<keyword id="KW-1185">Reference proteome</keyword>
<comment type="function">
    <text evidence="1">GTP-binding protein involved in protein trafficking; may modulate vesicle budding and uncoating within the Golgi apparatus.</text>
</comment>
<comment type="similarity">
    <text evidence="3">Belongs to the small GTPase superfamily. Arf family.</text>
</comment>
<accession>P25160</accession>
<accession>Q9VUW7</accession>
<name>ARL1_DROME</name>